<evidence type="ECO:0000255" key="1">
    <source>
        <dbReference type="HAMAP-Rule" id="MF_01031"/>
    </source>
</evidence>
<feature type="chain" id="PRO_1000213349" description="3-isopropylmalate dehydratase small subunit">
    <location>
        <begin position="1"/>
        <end position="201"/>
    </location>
</feature>
<name>LEUD_ECOBW</name>
<gene>
    <name evidence="1" type="primary">leuD</name>
    <name type="ordered locus">BWG_0067</name>
</gene>
<reference key="1">
    <citation type="journal article" date="2009" name="J. Bacteriol.">
        <title>Genomic sequencing reveals regulatory mutations and recombinational events in the widely used MC4100 lineage of Escherichia coli K-12.</title>
        <authorList>
            <person name="Ferenci T."/>
            <person name="Zhou Z."/>
            <person name="Betteridge T."/>
            <person name="Ren Y."/>
            <person name="Liu Y."/>
            <person name="Feng L."/>
            <person name="Reeves P.R."/>
            <person name="Wang L."/>
        </authorList>
    </citation>
    <scope>NUCLEOTIDE SEQUENCE [LARGE SCALE GENOMIC DNA]</scope>
    <source>
        <strain>K12 / MC4100 / BW2952</strain>
    </source>
</reference>
<protein>
    <recommendedName>
        <fullName evidence="1">3-isopropylmalate dehydratase small subunit</fullName>
        <ecNumber evidence="1">4.2.1.33</ecNumber>
    </recommendedName>
    <alternativeName>
        <fullName evidence="1">Alpha-IPM isomerase</fullName>
        <shortName evidence="1">IPMI</shortName>
    </alternativeName>
    <alternativeName>
        <fullName evidence="1">Isopropylmalate isomerase</fullName>
    </alternativeName>
</protein>
<comment type="function">
    <text evidence="1">Catalyzes the isomerization between 2-isopropylmalate and 3-isopropylmalate, via the formation of 2-isopropylmaleate.</text>
</comment>
<comment type="catalytic activity">
    <reaction evidence="1">
        <text>(2R,3S)-3-isopropylmalate = (2S)-2-isopropylmalate</text>
        <dbReference type="Rhea" id="RHEA:32287"/>
        <dbReference type="ChEBI" id="CHEBI:1178"/>
        <dbReference type="ChEBI" id="CHEBI:35121"/>
        <dbReference type="EC" id="4.2.1.33"/>
    </reaction>
</comment>
<comment type="pathway">
    <text evidence="1">Amino-acid biosynthesis; L-leucine biosynthesis; L-leucine from 3-methyl-2-oxobutanoate: step 2/4.</text>
</comment>
<comment type="subunit">
    <text evidence="1">Heterodimer of LeuC and LeuD.</text>
</comment>
<comment type="similarity">
    <text evidence="1">Belongs to the LeuD family. LeuD type 1 subfamily.</text>
</comment>
<sequence length="201" mass="22487">MAEKFIKHTGLVVPLDAANVDTDAIIPKQFLQKVTRTGFGAHLFNDWRFLDEKGQQPNPDFVLNFPQYQGASILLARENFGCGSSREHAPWALTDYGFKVVIAPSFADIFYGNSFNNQLLPVKLSDAEVDELFALVKANPGIHFDVDLEAQEVKAGEKTYRFTIDAFRRHCMMNGLDSIGLTLQHDDAIAAYEAKQPAFMN</sequence>
<accession>C4ZPZ4</accession>
<dbReference type="EC" id="4.2.1.33" evidence="1"/>
<dbReference type="EMBL" id="CP001396">
    <property type="protein sequence ID" value="ACR61815.1"/>
    <property type="molecule type" value="Genomic_DNA"/>
</dbReference>
<dbReference type="RefSeq" id="WP_000818228.1">
    <property type="nucleotide sequence ID" value="NC_012759.1"/>
</dbReference>
<dbReference type="SMR" id="C4ZPZ4"/>
<dbReference type="GeneID" id="93777364"/>
<dbReference type="KEGG" id="ebw:BWG_0067"/>
<dbReference type="HOGENOM" id="CLU_081378_0_3_6"/>
<dbReference type="UniPathway" id="UPA00048">
    <property type="reaction ID" value="UER00071"/>
</dbReference>
<dbReference type="GO" id="GO:0009316">
    <property type="term" value="C:3-isopropylmalate dehydratase complex"/>
    <property type="evidence" value="ECO:0007669"/>
    <property type="project" value="InterPro"/>
</dbReference>
<dbReference type="GO" id="GO:0003861">
    <property type="term" value="F:3-isopropylmalate dehydratase activity"/>
    <property type="evidence" value="ECO:0007669"/>
    <property type="project" value="UniProtKB-UniRule"/>
</dbReference>
<dbReference type="GO" id="GO:0009098">
    <property type="term" value="P:L-leucine biosynthetic process"/>
    <property type="evidence" value="ECO:0007669"/>
    <property type="project" value="UniProtKB-UniRule"/>
</dbReference>
<dbReference type="CDD" id="cd01577">
    <property type="entry name" value="IPMI_Swivel"/>
    <property type="match status" value="1"/>
</dbReference>
<dbReference type="FunFam" id="3.20.19.10:FF:000003">
    <property type="entry name" value="3-isopropylmalate dehydratase small subunit"/>
    <property type="match status" value="1"/>
</dbReference>
<dbReference type="Gene3D" id="3.20.19.10">
    <property type="entry name" value="Aconitase, domain 4"/>
    <property type="match status" value="1"/>
</dbReference>
<dbReference type="HAMAP" id="MF_01031">
    <property type="entry name" value="LeuD_type1"/>
    <property type="match status" value="1"/>
</dbReference>
<dbReference type="InterPro" id="IPR004431">
    <property type="entry name" value="3-IsopropMal_deHydase_ssu"/>
</dbReference>
<dbReference type="InterPro" id="IPR015928">
    <property type="entry name" value="Aconitase/3IPM_dehydase_swvl"/>
</dbReference>
<dbReference type="InterPro" id="IPR000573">
    <property type="entry name" value="AconitaseA/IPMdHydase_ssu_swvl"/>
</dbReference>
<dbReference type="InterPro" id="IPR033940">
    <property type="entry name" value="IPMI_Swivel"/>
</dbReference>
<dbReference type="InterPro" id="IPR050075">
    <property type="entry name" value="LeuD"/>
</dbReference>
<dbReference type="NCBIfam" id="TIGR00171">
    <property type="entry name" value="leuD"/>
    <property type="match status" value="1"/>
</dbReference>
<dbReference type="NCBIfam" id="NF002458">
    <property type="entry name" value="PRK01641.1"/>
    <property type="match status" value="1"/>
</dbReference>
<dbReference type="PANTHER" id="PTHR43345:SF5">
    <property type="entry name" value="3-ISOPROPYLMALATE DEHYDRATASE SMALL SUBUNIT"/>
    <property type="match status" value="1"/>
</dbReference>
<dbReference type="PANTHER" id="PTHR43345">
    <property type="entry name" value="3-ISOPROPYLMALATE DEHYDRATASE SMALL SUBUNIT 2-RELATED-RELATED"/>
    <property type="match status" value="1"/>
</dbReference>
<dbReference type="Pfam" id="PF00694">
    <property type="entry name" value="Aconitase_C"/>
    <property type="match status" value="1"/>
</dbReference>
<dbReference type="SUPFAM" id="SSF52016">
    <property type="entry name" value="LeuD/IlvD-like"/>
    <property type="match status" value="1"/>
</dbReference>
<proteinExistence type="inferred from homology"/>
<organism>
    <name type="scientific">Escherichia coli (strain K12 / MC4100 / BW2952)</name>
    <dbReference type="NCBI Taxonomy" id="595496"/>
    <lineage>
        <taxon>Bacteria</taxon>
        <taxon>Pseudomonadati</taxon>
        <taxon>Pseudomonadota</taxon>
        <taxon>Gammaproteobacteria</taxon>
        <taxon>Enterobacterales</taxon>
        <taxon>Enterobacteriaceae</taxon>
        <taxon>Escherichia</taxon>
    </lineage>
</organism>
<keyword id="KW-0028">Amino-acid biosynthesis</keyword>
<keyword id="KW-0100">Branched-chain amino acid biosynthesis</keyword>
<keyword id="KW-0432">Leucine biosynthesis</keyword>
<keyword id="KW-0456">Lyase</keyword>